<name>RAH1E_ARATH</name>
<proteinExistence type="evidence at transcript level"/>
<organism>
    <name type="scientific">Arabidopsis thaliana</name>
    <name type="common">Mouse-ear cress</name>
    <dbReference type="NCBI Taxonomy" id="3702"/>
    <lineage>
        <taxon>Eukaryota</taxon>
        <taxon>Viridiplantae</taxon>
        <taxon>Streptophyta</taxon>
        <taxon>Embryophyta</taxon>
        <taxon>Tracheophyta</taxon>
        <taxon>Spermatophyta</taxon>
        <taxon>Magnoliopsida</taxon>
        <taxon>eudicotyledons</taxon>
        <taxon>Gunneridae</taxon>
        <taxon>Pentapetalae</taxon>
        <taxon>rosids</taxon>
        <taxon>malvids</taxon>
        <taxon>Brassicales</taxon>
        <taxon>Brassicaceae</taxon>
        <taxon>Camelineae</taxon>
        <taxon>Arabidopsis</taxon>
    </lineage>
</organism>
<comment type="function">
    <text evidence="1">Protein transport. Regulator of membrane traffic from the Golgi apparatus towards the endoplasmic reticulum (ER) (By similarity).</text>
</comment>
<comment type="subcellular location">
    <subcellularLocation>
        <location evidence="2">Golgi apparatus membrane</location>
        <topology evidence="2">Lipid-anchor</topology>
    </subcellularLocation>
</comment>
<comment type="similarity">
    <text evidence="2">Belongs to the small GTPase superfamily. Rab family.</text>
</comment>
<comment type="sequence caution" evidence="2">
    <conflict type="erroneous initiation">
        <sequence resource="EMBL-CDS" id="AAW70387"/>
    </conflict>
    <text>Truncated N-terminus.</text>
</comment>
<protein>
    <recommendedName>
        <fullName>Ras-related protein RABH1e</fullName>
        <shortName>AtRABH1e</shortName>
    </recommendedName>
</protein>
<dbReference type="EMBL" id="AL360334">
    <property type="protein sequence ID" value="CAB96682.1"/>
    <property type="molecule type" value="Genomic_DNA"/>
</dbReference>
<dbReference type="EMBL" id="CP002688">
    <property type="protein sequence ID" value="AED91514.1"/>
    <property type="molecule type" value="Genomic_DNA"/>
</dbReference>
<dbReference type="EMBL" id="BT020541">
    <property type="protein sequence ID" value="AAW70387.1"/>
    <property type="status" value="ALT_INIT"/>
    <property type="molecule type" value="mRNA"/>
</dbReference>
<dbReference type="EMBL" id="BT024829">
    <property type="protein sequence ID" value="ABD60712.1"/>
    <property type="molecule type" value="mRNA"/>
</dbReference>
<dbReference type="PIR" id="T50814">
    <property type="entry name" value="T50814"/>
</dbReference>
<dbReference type="RefSeq" id="NP_196588.3">
    <property type="nucleotide sequence ID" value="NM_121064.4"/>
</dbReference>
<dbReference type="SMR" id="Q9LFT9"/>
<dbReference type="FunCoup" id="Q9LFT9">
    <property type="interactions" value="1860"/>
</dbReference>
<dbReference type="STRING" id="3702.Q9LFT9"/>
<dbReference type="PaxDb" id="3702-AT5G10260.1"/>
<dbReference type="ProteomicsDB" id="235095"/>
<dbReference type="EnsemblPlants" id="AT5G10260.1">
    <property type="protein sequence ID" value="AT5G10260.1"/>
    <property type="gene ID" value="AT5G10260"/>
</dbReference>
<dbReference type="GeneID" id="830890"/>
<dbReference type="Gramene" id="AT5G10260.1">
    <property type="protein sequence ID" value="AT5G10260.1"/>
    <property type="gene ID" value="AT5G10260"/>
</dbReference>
<dbReference type="KEGG" id="ath:AT5G10260"/>
<dbReference type="Araport" id="AT5G10260"/>
<dbReference type="TAIR" id="AT5G10260">
    <property type="gene designation" value="RABH1E"/>
</dbReference>
<dbReference type="eggNOG" id="KOG0094">
    <property type="taxonomic scope" value="Eukaryota"/>
</dbReference>
<dbReference type="HOGENOM" id="CLU_041217_10_2_1"/>
<dbReference type="InParanoid" id="Q9LFT9"/>
<dbReference type="OMA" id="VYEQIPE"/>
<dbReference type="OrthoDB" id="63533at2759"/>
<dbReference type="PhylomeDB" id="Q9LFT9"/>
<dbReference type="PRO" id="PR:Q9LFT9"/>
<dbReference type="Proteomes" id="UP000006548">
    <property type="component" value="Chromosome 5"/>
</dbReference>
<dbReference type="ExpressionAtlas" id="Q9LFT9">
    <property type="expression patterns" value="baseline and differential"/>
</dbReference>
<dbReference type="GO" id="GO:0000139">
    <property type="term" value="C:Golgi membrane"/>
    <property type="evidence" value="ECO:0007669"/>
    <property type="project" value="UniProtKB-SubCell"/>
</dbReference>
<dbReference type="GO" id="GO:0005886">
    <property type="term" value="C:plasma membrane"/>
    <property type="evidence" value="ECO:0007005"/>
    <property type="project" value="TAIR"/>
</dbReference>
<dbReference type="GO" id="GO:0005525">
    <property type="term" value="F:GTP binding"/>
    <property type="evidence" value="ECO:0007669"/>
    <property type="project" value="UniProtKB-KW"/>
</dbReference>
<dbReference type="GO" id="GO:0003924">
    <property type="term" value="F:GTPase activity"/>
    <property type="evidence" value="ECO:0007669"/>
    <property type="project" value="InterPro"/>
</dbReference>
<dbReference type="GO" id="GO:0015031">
    <property type="term" value="P:protein transport"/>
    <property type="evidence" value="ECO:0007669"/>
    <property type="project" value="UniProtKB-KW"/>
</dbReference>
<dbReference type="GO" id="GO:0016192">
    <property type="term" value="P:vesicle-mediated transport"/>
    <property type="evidence" value="ECO:0007669"/>
    <property type="project" value="UniProtKB-KW"/>
</dbReference>
<dbReference type="CDD" id="cd01861">
    <property type="entry name" value="Rab6"/>
    <property type="match status" value="1"/>
</dbReference>
<dbReference type="FunFam" id="3.40.50.300:FF:002888">
    <property type="entry name" value="ras-related protein RABH1e isoform X2"/>
    <property type="match status" value="1"/>
</dbReference>
<dbReference type="Gene3D" id="3.40.50.300">
    <property type="entry name" value="P-loop containing nucleotide triphosphate hydrolases"/>
    <property type="match status" value="1"/>
</dbReference>
<dbReference type="InterPro" id="IPR027417">
    <property type="entry name" value="P-loop_NTPase"/>
</dbReference>
<dbReference type="InterPro" id="IPR050227">
    <property type="entry name" value="Rab"/>
</dbReference>
<dbReference type="InterPro" id="IPR005225">
    <property type="entry name" value="Small_GTP-bd"/>
</dbReference>
<dbReference type="InterPro" id="IPR001806">
    <property type="entry name" value="Small_GTPase"/>
</dbReference>
<dbReference type="NCBIfam" id="TIGR00231">
    <property type="entry name" value="small_GTP"/>
    <property type="match status" value="1"/>
</dbReference>
<dbReference type="PANTHER" id="PTHR47977">
    <property type="entry name" value="RAS-RELATED PROTEIN RAB"/>
    <property type="match status" value="1"/>
</dbReference>
<dbReference type="Pfam" id="PF00071">
    <property type="entry name" value="Ras"/>
    <property type="match status" value="1"/>
</dbReference>
<dbReference type="PRINTS" id="PR00449">
    <property type="entry name" value="RASTRNSFRMNG"/>
</dbReference>
<dbReference type="SMART" id="SM00175">
    <property type="entry name" value="RAB"/>
    <property type="match status" value="1"/>
</dbReference>
<dbReference type="SMART" id="SM00176">
    <property type="entry name" value="RAN"/>
    <property type="match status" value="1"/>
</dbReference>
<dbReference type="SMART" id="SM00173">
    <property type="entry name" value="RAS"/>
    <property type="match status" value="1"/>
</dbReference>
<dbReference type="SMART" id="SM00174">
    <property type="entry name" value="RHO"/>
    <property type="match status" value="1"/>
</dbReference>
<dbReference type="SUPFAM" id="SSF52540">
    <property type="entry name" value="P-loop containing nucleoside triphosphate hydrolases"/>
    <property type="match status" value="1"/>
</dbReference>
<dbReference type="PROSITE" id="PS51419">
    <property type="entry name" value="RAB"/>
    <property type="match status" value="1"/>
</dbReference>
<keyword id="KW-0931">ER-Golgi transport</keyword>
<keyword id="KW-0333">Golgi apparatus</keyword>
<keyword id="KW-0342">GTP-binding</keyword>
<keyword id="KW-0449">Lipoprotein</keyword>
<keyword id="KW-0472">Membrane</keyword>
<keyword id="KW-0488">Methylation</keyword>
<keyword id="KW-0547">Nucleotide-binding</keyword>
<keyword id="KW-0636">Prenylation</keyword>
<keyword id="KW-0653">Protein transport</keyword>
<keyword id="KW-1185">Reference proteome</keyword>
<keyword id="KW-0813">Transport</keyword>
<sequence length="207" mass="23133">MASVSPLAKYKLVFLGDQSVGKTSIITRFMYDKFDTTYQATIGIDFLSKTMYLEDRTVRLQLWDTAGQERFRSLIPSYIRDSSVAVIVYDVANRQSFLNTSKWIEDVRTERGSDVIIVLVGNKTDLVDKRQVSIEEGDNKARDYGVIFIETSAKAGFNIKPLFRKIAAALPGMETLSSTKQEDMVDVNLKTSSNSAQGEQQRGGCAC</sequence>
<gene>
    <name type="primary">RABH1E</name>
    <name type="ordered locus">At5g10260</name>
    <name type="ORF">F18D22.30</name>
</gene>
<reference key="1">
    <citation type="journal article" date="2000" name="Nature">
        <title>Sequence and analysis of chromosome 5 of the plant Arabidopsis thaliana.</title>
        <authorList>
            <person name="Tabata S."/>
            <person name="Kaneko T."/>
            <person name="Nakamura Y."/>
            <person name="Kotani H."/>
            <person name="Kato T."/>
            <person name="Asamizu E."/>
            <person name="Miyajima N."/>
            <person name="Sasamoto S."/>
            <person name="Kimura T."/>
            <person name="Hosouchi T."/>
            <person name="Kawashima K."/>
            <person name="Kohara M."/>
            <person name="Matsumoto M."/>
            <person name="Matsuno A."/>
            <person name="Muraki A."/>
            <person name="Nakayama S."/>
            <person name="Nakazaki N."/>
            <person name="Naruo K."/>
            <person name="Okumura S."/>
            <person name="Shinpo S."/>
            <person name="Takeuchi C."/>
            <person name="Wada T."/>
            <person name="Watanabe A."/>
            <person name="Yamada M."/>
            <person name="Yasuda M."/>
            <person name="Sato S."/>
            <person name="de la Bastide M."/>
            <person name="Huang E."/>
            <person name="Spiegel L."/>
            <person name="Gnoj L."/>
            <person name="O'Shaughnessy A."/>
            <person name="Preston R."/>
            <person name="Habermann K."/>
            <person name="Murray J."/>
            <person name="Johnson D."/>
            <person name="Rohlfing T."/>
            <person name="Nelson J."/>
            <person name="Stoneking T."/>
            <person name="Pepin K."/>
            <person name="Spieth J."/>
            <person name="Sekhon M."/>
            <person name="Armstrong J."/>
            <person name="Becker M."/>
            <person name="Belter E."/>
            <person name="Cordum H."/>
            <person name="Cordes M."/>
            <person name="Courtney L."/>
            <person name="Courtney W."/>
            <person name="Dante M."/>
            <person name="Du H."/>
            <person name="Edwards J."/>
            <person name="Fryman J."/>
            <person name="Haakensen B."/>
            <person name="Lamar E."/>
            <person name="Latreille P."/>
            <person name="Leonard S."/>
            <person name="Meyer R."/>
            <person name="Mulvaney E."/>
            <person name="Ozersky P."/>
            <person name="Riley A."/>
            <person name="Strowmatt C."/>
            <person name="Wagner-McPherson C."/>
            <person name="Wollam A."/>
            <person name="Yoakum M."/>
            <person name="Bell M."/>
            <person name="Dedhia N."/>
            <person name="Parnell L."/>
            <person name="Shah R."/>
            <person name="Rodriguez M."/>
            <person name="Hoon See L."/>
            <person name="Vil D."/>
            <person name="Baker J."/>
            <person name="Kirchoff K."/>
            <person name="Toth K."/>
            <person name="King L."/>
            <person name="Bahret A."/>
            <person name="Miller B."/>
            <person name="Marra M.A."/>
            <person name="Martienssen R."/>
            <person name="McCombie W.R."/>
            <person name="Wilson R.K."/>
            <person name="Murphy G."/>
            <person name="Bancroft I."/>
            <person name="Volckaert G."/>
            <person name="Wambutt R."/>
            <person name="Duesterhoeft A."/>
            <person name="Stiekema W."/>
            <person name="Pohl T."/>
            <person name="Entian K.-D."/>
            <person name="Terryn N."/>
            <person name="Hartley N."/>
            <person name="Bent E."/>
            <person name="Johnson S."/>
            <person name="Langham S.-A."/>
            <person name="McCullagh B."/>
            <person name="Robben J."/>
            <person name="Grymonprez B."/>
            <person name="Zimmermann W."/>
            <person name="Ramsperger U."/>
            <person name="Wedler H."/>
            <person name="Balke K."/>
            <person name="Wedler E."/>
            <person name="Peters S."/>
            <person name="van Staveren M."/>
            <person name="Dirkse W."/>
            <person name="Mooijman P."/>
            <person name="Klein Lankhorst R."/>
            <person name="Weitzenegger T."/>
            <person name="Bothe G."/>
            <person name="Rose M."/>
            <person name="Hauf J."/>
            <person name="Berneiser S."/>
            <person name="Hempel S."/>
            <person name="Feldpausch M."/>
            <person name="Lamberth S."/>
            <person name="Villarroel R."/>
            <person name="Gielen J."/>
            <person name="Ardiles W."/>
            <person name="Bents O."/>
            <person name="Lemcke K."/>
            <person name="Kolesov G."/>
            <person name="Mayer K.F.X."/>
            <person name="Rudd S."/>
            <person name="Schoof H."/>
            <person name="Schueller C."/>
            <person name="Zaccaria P."/>
            <person name="Mewes H.-W."/>
            <person name="Bevan M."/>
            <person name="Fransz P.F."/>
        </authorList>
    </citation>
    <scope>NUCLEOTIDE SEQUENCE [LARGE SCALE GENOMIC DNA]</scope>
    <source>
        <strain>cv. Columbia</strain>
    </source>
</reference>
<reference key="2">
    <citation type="journal article" date="2017" name="Plant J.">
        <title>Araport11: a complete reannotation of the Arabidopsis thaliana reference genome.</title>
        <authorList>
            <person name="Cheng C.Y."/>
            <person name="Krishnakumar V."/>
            <person name="Chan A.P."/>
            <person name="Thibaud-Nissen F."/>
            <person name="Schobel S."/>
            <person name="Town C.D."/>
        </authorList>
    </citation>
    <scope>GENOME REANNOTATION</scope>
    <source>
        <strain>cv. Columbia</strain>
    </source>
</reference>
<reference key="3">
    <citation type="submission" date="2005-01" db="EMBL/GenBank/DDBJ databases">
        <title>Arabidopsis ORF clones.</title>
        <authorList>
            <person name="Cheuk R.F."/>
            <person name="Chen H."/>
            <person name="Kim C.J."/>
            <person name="Shinn P."/>
            <person name="Ecker J.R."/>
        </authorList>
    </citation>
    <scope>NUCLEOTIDE SEQUENCE [LARGE SCALE MRNA] OF 26-207</scope>
    <source>
        <strain>cv. Columbia</strain>
    </source>
</reference>
<reference key="4">
    <citation type="submission" date="2006-03" db="EMBL/GenBank/DDBJ databases">
        <title>Arabidopsis ORF clones.</title>
        <authorList>
            <person name="Kim C.J."/>
            <person name="Chen H."/>
            <person name="Shinn P."/>
            <person name="Ecker J.R."/>
        </authorList>
    </citation>
    <scope>NUCLEOTIDE SEQUENCE [LARGE SCALE MRNA] OF 30-207</scope>
    <source>
        <strain>cv. Columbia</strain>
    </source>
</reference>
<reference key="5">
    <citation type="journal article" date="2003" name="Plant Physiol.">
        <title>Analysis of the small GTPase gene superfamily of Arabidopsis.</title>
        <authorList>
            <person name="Vernoud V."/>
            <person name="Horton A.C."/>
            <person name="Yang Z."/>
            <person name="Nielsen E."/>
        </authorList>
    </citation>
    <scope>GENE FAMILY</scope>
    <scope>NOMENCLATURE</scope>
</reference>
<evidence type="ECO:0000250" key="1"/>
<evidence type="ECO:0000305" key="2"/>
<accession>Q9LFT9</accession>
<accession>Q5FV33</accession>
<feature type="chain" id="PRO_0000407334" description="Ras-related protein RABH1e">
    <location>
        <begin position="1"/>
        <end position="207"/>
    </location>
</feature>
<feature type="short sequence motif" description="Effector region" evidence="1">
    <location>
        <begin position="38"/>
        <end position="46"/>
    </location>
</feature>
<feature type="binding site" evidence="1">
    <location>
        <begin position="16"/>
        <end position="23"/>
    </location>
    <ligand>
        <name>GTP</name>
        <dbReference type="ChEBI" id="CHEBI:37565"/>
    </ligand>
</feature>
<feature type="binding site" evidence="1">
    <location>
        <begin position="64"/>
        <end position="68"/>
    </location>
    <ligand>
        <name>GTP</name>
        <dbReference type="ChEBI" id="CHEBI:37565"/>
    </ligand>
</feature>
<feature type="binding site" evidence="1">
    <location>
        <begin position="122"/>
        <end position="125"/>
    </location>
    <ligand>
        <name>GTP</name>
        <dbReference type="ChEBI" id="CHEBI:37565"/>
    </ligand>
</feature>
<feature type="binding site" evidence="1">
    <location>
        <begin position="152"/>
        <end position="153"/>
    </location>
    <ligand>
        <name>GTP</name>
        <dbReference type="ChEBI" id="CHEBI:37565"/>
    </ligand>
</feature>
<feature type="modified residue" description="Cysteine methyl ester" evidence="1">
    <location>
        <position position="207"/>
    </location>
</feature>
<feature type="lipid moiety-binding region" description="S-geranylgeranyl cysteine" evidence="1">
    <location>
        <position position="205"/>
    </location>
</feature>
<feature type="lipid moiety-binding region" description="S-geranylgeranyl cysteine" evidence="1">
    <location>
        <position position="207"/>
    </location>
</feature>